<organism>
    <name type="scientific">Isodon rubescens</name>
    <name type="common">Rabdosia rubescens</name>
    <dbReference type="NCBI Taxonomy" id="587669"/>
    <lineage>
        <taxon>Eukaryota</taxon>
        <taxon>Viridiplantae</taxon>
        <taxon>Streptophyta</taxon>
        <taxon>Embryophyta</taxon>
        <taxon>Tracheophyta</taxon>
        <taxon>Spermatophyta</taxon>
        <taxon>Magnoliopsida</taxon>
        <taxon>eudicotyledons</taxon>
        <taxon>Gunneridae</taxon>
        <taxon>Pentapetalae</taxon>
        <taxon>asterids</taxon>
        <taxon>lamiids</taxon>
        <taxon>Lamiales</taxon>
        <taxon>Lamiaceae</taxon>
        <taxon>Nepetoideae</taxon>
        <taxon>Ocimeae</taxon>
        <taxon>Isodoninae</taxon>
        <taxon>Isodon</taxon>
    </lineage>
</organism>
<proteinExistence type="evidence at transcript level"/>
<reference key="1">
    <citation type="journal article" date="2017" name="Plant Physiol.">
        <title>Functional diversification of kaurene synthase-like genes in Isodon rubescens.</title>
        <authorList>
            <person name="Jin B."/>
            <person name="Cui G."/>
            <person name="Guo J."/>
            <person name="Tang J."/>
            <person name="Duan L."/>
            <person name="Lin H."/>
            <person name="Shen Y."/>
            <person name="Chen T."/>
            <person name="Zhang H."/>
            <person name="Huang L."/>
        </authorList>
    </citation>
    <scope>NUCLEOTIDE SEQUENCE [MRNA]</scope>
    <scope>TISSUE SPECIFICITY</scope>
</reference>
<reference key="2">
    <citation type="journal article" date="2017" name="PLoS ONE">
        <title>Biosynthesis of the oxygenated diterpene nezukol in the medicinal plant Isodon rubescens is catalyzed by a pair of diterpene synthases.</title>
        <authorList>
            <person name="Pelot K.A."/>
            <person name="Hagelthorn L.M."/>
            <person name="Addison J.B."/>
            <person name="Zerbe P."/>
        </authorList>
    </citation>
    <scope>NUCLEOTIDE SEQUENCE [MRNA] OF 1-530</scope>
</reference>
<comment type="tissue specificity">
    <text evidence="1">Mostly expressed in stems, and, at low levels, in roots and leaves, but barely in flowers.</text>
</comment>
<comment type="domain">
    <text evidence="4">The Asp-Xaa-Asp-Asp (DXDD) motif is important for the catalytic activity, presumably through binding to Mg(2+).</text>
</comment>
<comment type="similarity">
    <text evidence="4">Belongs to the terpene synthase family. Tpsc subfamily.</text>
</comment>
<comment type="caution">
    <text evidence="5">Probably inactive enzyme; missing the second Asp of the DXDD motif that has been reported to be essential in forming hydrogen-bonded 'proton wires' during catalysis.</text>
</comment>
<name>CPS3_ISORU</name>
<feature type="chain" id="PRO_0000452392" description="Probably inactive copalyl diphosphate synthase 3">
    <location>
        <begin position="1"/>
        <end position="746"/>
    </location>
</feature>
<feature type="short sequence motif" description="DXDD motif; degenerated" evidence="4">
    <location>
        <begin position="331"/>
        <end position="334"/>
    </location>
</feature>
<feature type="sequence conflict" description="In Ref. 2; ARO38146." evidence="4" ref="2">
    <original>L</original>
    <variation>F</variation>
    <location>
        <position position="231"/>
    </location>
</feature>
<feature type="sequence conflict" description="In Ref. 2; ARO38146." evidence="4" ref="2">
    <original>A</original>
    <variation>T</variation>
    <location>
        <position position="288"/>
    </location>
</feature>
<feature type="sequence conflict" description="In Ref. 2; ARO38146." evidence="4" ref="2">
    <original>D</original>
    <variation>N</variation>
    <location>
        <position position="361"/>
    </location>
</feature>
<feature type="sequence conflict" description="In Ref. 2; ARO38146." evidence="4" ref="2">
    <original>E</original>
    <variation>K</variation>
    <location>
        <position position="446"/>
    </location>
</feature>
<feature type="sequence conflict" description="In Ref. 2; ARO38146." evidence="4" ref="2">
    <original>LAAASIF</original>
    <variation>FGGCKHI</variation>
    <location>
        <begin position="524"/>
        <end position="530"/>
    </location>
</feature>
<evidence type="ECO:0000269" key="1">
    <source>
    </source>
</evidence>
<evidence type="ECO:0000303" key="2">
    <source>
    </source>
</evidence>
<evidence type="ECO:0000303" key="3">
    <source>
    </source>
</evidence>
<evidence type="ECO:0000305" key="4"/>
<evidence type="ECO:0000305" key="5">
    <source>
    </source>
</evidence>
<gene>
    <name evidence="2" type="primary">CPS3</name>
    <name evidence="3" type="synonym">TPS7</name>
</gene>
<dbReference type="EMBL" id="KU180501">
    <property type="protein sequence ID" value="APJ36373.1"/>
    <property type="molecule type" value="mRNA"/>
</dbReference>
<dbReference type="EMBL" id="KY661363">
    <property type="protein sequence ID" value="ARO38146.1"/>
    <property type="molecule type" value="mRNA"/>
</dbReference>
<dbReference type="SMR" id="A0A1X9IRT6"/>
<dbReference type="GO" id="GO:0009507">
    <property type="term" value="C:chloroplast"/>
    <property type="evidence" value="ECO:0007669"/>
    <property type="project" value="TreeGrafter"/>
</dbReference>
<dbReference type="GO" id="GO:0000287">
    <property type="term" value="F:magnesium ion binding"/>
    <property type="evidence" value="ECO:0007669"/>
    <property type="project" value="TreeGrafter"/>
</dbReference>
<dbReference type="GO" id="GO:0010333">
    <property type="term" value="F:terpene synthase activity"/>
    <property type="evidence" value="ECO:0007669"/>
    <property type="project" value="InterPro"/>
</dbReference>
<dbReference type="GO" id="GO:0009686">
    <property type="term" value="P:gibberellin biosynthetic process"/>
    <property type="evidence" value="ECO:0007669"/>
    <property type="project" value="TreeGrafter"/>
</dbReference>
<dbReference type="GO" id="GO:0042214">
    <property type="term" value="P:terpene metabolic process"/>
    <property type="evidence" value="ECO:0007669"/>
    <property type="project" value="UniProtKB-ARBA"/>
</dbReference>
<dbReference type="FunFam" id="1.50.10.130:FF:000002">
    <property type="entry name" value="Ent-copalyl diphosphate synthase, chloroplastic"/>
    <property type="match status" value="1"/>
</dbReference>
<dbReference type="Gene3D" id="1.50.10.160">
    <property type="match status" value="1"/>
</dbReference>
<dbReference type="Gene3D" id="1.10.600.10">
    <property type="entry name" value="Farnesyl Diphosphate Synthase"/>
    <property type="match status" value="1"/>
</dbReference>
<dbReference type="Gene3D" id="1.50.10.130">
    <property type="entry name" value="Terpene synthase, N-terminal domain"/>
    <property type="match status" value="1"/>
</dbReference>
<dbReference type="InterPro" id="IPR008949">
    <property type="entry name" value="Isoprenoid_synthase_dom_sf"/>
</dbReference>
<dbReference type="InterPro" id="IPR001906">
    <property type="entry name" value="Terpene_synth_N"/>
</dbReference>
<dbReference type="InterPro" id="IPR036965">
    <property type="entry name" value="Terpene_synth_N_sf"/>
</dbReference>
<dbReference type="InterPro" id="IPR050148">
    <property type="entry name" value="Terpene_synthase-like"/>
</dbReference>
<dbReference type="InterPro" id="IPR008930">
    <property type="entry name" value="Terpenoid_cyclase/PrenylTrfase"/>
</dbReference>
<dbReference type="PANTHER" id="PTHR31739:SF30">
    <property type="entry name" value="COPAL-8-OL DIPHOSPHATE HYDRATASE, CHLOROPLASTIC"/>
    <property type="match status" value="1"/>
</dbReference>
<dbReference type="PANTHER" id="PTHR31739">
    <property type="entry name" value="ENT-COPALYL DIPHOSPHATE SYNTHASE, CHLOROPLASTIC"/>
    <property type="match status" value="1"/>
</dbReference>
<dbReference type="Pfam" id="PF01397">
    <property type="entry name" value="Terpene_synth"/>
    <property type="match status" value="1"/>
</dbReference>
<dbReference type="SFLD" id="SFLDG01014">
    <property type="entry name" value="Terpene_Cyclase_Like_1_N-term"/>
    <property type="match status" value="1"/>
</dbReference>
<dbReference type="SUPFAM" id="SSF48239">
    <property type="entry name" value="Terpenoid cyclases/Protein prenyltransferases"/>
    <property type="match status" value="2"/>
</dbReference>
<dbReference type="SUPFAM" id="SSF48576">
    <property type="entry name" value="Terpenoid synthases"/>
    <property type="match status" value="1"/>
</dbReference>
<sequence length="746" mass="85202">MDDNYRIFNKNLITNAARRGTPQVCTGNGGFEPQPFDKEYVLQKNKIEECITKTLQSIGDGRISASAYDTAWIALIKDVINRDLPLFPWSLEWIVSNQLRDGSWGDRDFFVPCDRLLSTLACVVALSTWNVHPNETERGILFVKENISKLEDGDDVHTTLGFEILFPALLERARNLGIEGLPYDDPTTQKICAERDLKLDRISKELIINEVPASLLLILEGLENLNWENILKLQSPDGSFLGSPATTAFVFMETKDESCLSYLKKTVQNFGGGAPSLYPVDILTRLLAVDRLQRLGISRFFHSQIEDCLSYIYRFWTGNGVFSGRDSEFCDVNDTSMAFRLLRLHGYNVSPNVFTNFKKGDEFSVYGDDEVVDSPSTMLNLYRASEVRFAGETILEEAKEFSHNFLQQRQGLPNQVLDNCLISKNLHTEIKYELETPWFASLPRLEARFFIERYNAVDEVCIGKSLYRLPDTNEGTYLELAKLDYNRCQEQHQMEWNHMQQWYEDCNLEEFGISKNDILEAHFLAAASIFEAERSGERVAWVKTQILSHILSTYYFIKQSHQDHKPQLSTEKAHIAGQPGKGFKNVQRIISILFEALTQMKKDALEGSNGDISDDLLHEAWGGWLKKLGEGETEERQEAELIARTINVCGGHILSKQILSHHEYKTLSQLTNQICHNLHNSKMIGKEMENEMQLLVQLVLQESSNGISKAIKQTFLVVAKAFYYRAYFSAKQIENHVSIILFEQLV</sequence>
<protein>
    <recommendedName>
        <fullName evidence="2">Probably inactive copalyl diphosphate synthase 3</fullName>
        <shortName evidence="2">IrCPS3</shortName>
    </recommendedName>
    <alternativeName>
        <fullName evidence="3">Probably inactive diterpene synthase 7</fullName>
        <shortName evidence="3">IrTPS7</shortName>
    </alternativeName>
</protein>
<accession>A0A1X9IRT6</accession>
<accession>A0A1W6QDH6</accession>